<reference key="1">
    <citation type="journal article" date="2004" name="Genome Res.">
        <title>The status, quality, and expansion of the NIH full-length cDNA project: the Mammalian Gene Collection (MGC).</title>
        <authorList>
            <consortium name="The MGC Project Team"/>
        </authorList>
    </citation>
    <scope>NUCLEOTIDE SEQUENCE [LARGE SCALE MRNA]</scope>
    <source>
        <tissue>Mammary tumor</tissue>
    </source>
</reference>
<reference key="2">
    <citation type="journal article" date="2010" name="Cell">
        <title>A tissue-specific atlas of mouse protein phosphorylation and expression.</title>
        <authorList>
            <person name="Huttlin E.L."/>
            <person name="Jedrychowski M.P."/>
            <person name="Elias J.E."/>
            <person name="Goswami T."/>
            <person name="Rad R."/>
            <person name="Beausoleil S.A."/>
            <person name="Villen J."/>
            <person name="Haas W."/>
            <person name="Sowa M.E."/>
            <person name="Gygi S.P."/>
        </authorList>
    </citation>
    <scope>IDENTIFICATION BY MASS SPECTROMETRY [LARGE SCALE ANALYSIS]</scope>
    <source>
        <tissue>Liver</tissue>
    </source>
</reference>
<dbReference type="EMBL" id="BC021800">
    <property type="protein sequence ID" value="AAH21800.1"/>
    <property type="molecule type" value="mRNA"/>
</dbReference>
<dbReference type="CCDS" id="CCDS25160.1"/>
<dbReference type="RefSeq" id="NP_001351691.1">
    <property type="nucleotide sequence ID" value="NM_001364762.1"/>
</dbReference>
<dbReference type="RefSeq" id="NP_001351692.1">
    <property type="nucleotide sequence ID" value="NM_001364763.1"/>
</dbReference>
<dbReference type="RefSeq" id="NP_598786.1">
    <property type="nucleotide sequence ID" value="NM_134025.4"/>
</dbReference>
<dbReference type="RefSeq" id="XP_006531976.1">
    <property type="nucleotide sequence ID" value="XM_006531913.1"/>
</dbReference>
<dbReference type="RefSeq" id="XP_006531977.1">
    <property type="nucleotide sequence ID" value="XM_006531914.2"/>
</dbReference>
<dbReference type="RefSeq" id="XP_006531978.1">
    <property type="nucleotide sequence ID" value="XM_006531915.2"/>
</dbReference>
<dbReference type="RefSeq" id="XP_030101312.1">
    <property type="nucleotide sequence ID" value="XM_030245452.2"/>
</dbReference>
<dbReference type="RefSeq" id="XP_030101313.1">
    <property type="nucleotide sequence ID" value="XM_030245453.2"/>
</dbReference>
<dbReference type="RefSeq" id="XP_030101314.1">
    <property type="nucleotide sequence ID" value="XM_030245454.2"/>
</dbReference>
<dbReference type="SMR" id="Q8VC48"/>
<dbReference type="BioGRID" id="222151">
    <property type="interactions" value="1"/>
</dbReference>
<dbReference type="FunCoup" id="Q8VC48">
    <property type="interactions" value="1696"/>
</dbReference>
<dbReference type="STRING" id="10090.ENSMUSP00000018877"/>
<dbReference type="GlyGen" id="Q8VC48">
    <property type="glycosylation" value="1 site"/>
</dbReference>
<dbReference type="PhosphoSitePlus" id="Q8VC48"/>
<dbReference type="PaxDb" id="10090-ENSMUSP00000018877"/>
<dbReference type="ProteomicsDB" id="288097"/>
<dbReference type="Pumba" id="Q8VC48"/>
<dbReference type="Antibodypedia" id="27495">
    <property type="antibodies" value="129 antibodies from 26 providers"/>
</dbReference>
<dbReference type="DNASU" id="103737"/>
<dbReference type="Ensembl" id="ENSMUST00000018877.9">
    <property type="protein sequence ID" value="ENSMUSP00000018877.3"/>
    <property type="gene ID" value="ENSMUSG00000018733.11"/>
</dbReference>
<dbReference type="Ensembl" id="ENSMUST00000108146.8">
    <property type="protein sequence ID" value="ENSMUSP00000103781.2"/>
    <property type="gene ID" value="ENSMUSG00000018733.11"/>
</dbReference>
<dbReference type="Ensembl" id="ENSMUST00000175741.8">
    <property type="protein sequence ID" value="ENSMUSP00000135145.2"/>
    <property type="gene ID" value="ENSMUSG00000018733.11"/>
</dbReference>
<dbReference type="Ensembl" id="ENSMUST00000176518.2">
    <property type="protein sequence ID" value="ENSMUSP00000135632.2"/>
    <property type="gene ID" value="ENSMUSG00000018733.11"/>
</dbReference>
<dbReference type="GeneID" id="103737"/>
<dbReference type="KEGG" id="mmu:103737"/>
<dbReference type="UCSC" id="uc007kon.1">
    <property type="organism name" value="mouse"/>
</dbReference>
<dbReference type="AGR" id="MGI:2144177"/>
<dbReference type="CTD" id="5193"/>
<dbReference type="MGI" id="MGI:2144177">
    <property type="gene designation" value="Pex12"/>
</dbReference>
<dbReference type="VEuPathDB" id="HostDB:ENSMUSG00000018733"/>
<dbReference type="eggNOG" id="KOG0826">
    <property type="taxonomic scope" value="Eukaryota"/>
</dbReference>
<dbReference type="GeneTree" id="ENSGT00390000016209"/>
<dbReference type="HOGENOM" id="CLU_031067_1_0_1"/>
<dbReference type="InParanoid" id="Q8VC48"/>
<dbReference type="OMA" id="QHYLARC"/>
<dbReference type="OrthoDB" id="107372at2759"/>
<dbReference type="PhylomeDB" id="Q8VC48"/>
<dbReference type="TreeFam" id="TF314511"/>
<dbReference type="Reactome" id="R-MMU-8866654">
    <property type="pathway name" value="E3 ubiquitin ligases ubiquitinate target proteins"/>
</dbReference>
<dbReference type="Reactome" id="R-MMU-9033241">
    <property type="pathway name" value="Peroxisomal protein import"/>
</dbReference>
<dbReference type="Reactome" id="R-MMU-9603798">
    <property type="pathway name" value="Class I peroxisomal membrane protein import"/>
</dbReference>
<dbReference type="UniPathway" id="UPA00143"/>
<dbReference type="BioGRID-ORCS" id="103737">
    <property type="hits" value="12 hits in 79 CRISPR screens"/>
</dbReference>
<dbReference type="CD-CODE" id="CE726F99">
    <property type="entry name" value="Postsynaptic density"/>
</dbReference>
<dbReference type="ChiTaRS" id="Pex12">
    <property type="organism name" value="mouse"/>
</dbReference>
<dbReference type="PRO" id="PR:Q8VC48"/>
<dbReference type="Proteomes" id="UP000000589">
    <property type="component" value="Chromosome 11"/>
</dbReference>
<dbReference type="RNAct" id="Q8VC48">
    <property type="molecule type" value="protein"/>
</dbReference>
<dbReference type="Bgee" id="ENSMUSG00000018733">
    <property type="expression patterns" value="Expressed in secondary oocyte and 246 other cell types or tissues"/>
</dbReference>
<dbReference type="ExpressionAtlas" id="Q8VC48">
    <property type="expression patterns" value="baseline and differential"/>
</dbReference>
<dbReference type="GO" id="GO:0005778">
    <property type="term" value="C:peroxisomal membrane"/>
    <property type="evidence" value="ECO:0007669"/>
    <property type="project" value="UniProtKB-SubCell"/>
</dbReference>
<dbReference type="GO" id="GO:0005777">
    <property type="term" value="C:peroxisome"/>
    <property type="evidence" value="ECO:0000266"/>
    <property type="project" value="MGI"/>
</dbReference>
<dbReference type="GO" id="GO:1990757">
    <property type="term" value="F:ubiquitin ligase activator activity"/>
    <property type="evidence" value="ECO:0007669"/>
    <property type="project" value="Ensembl"/>
</dbReference>
<dbReference type="GO" id="GO:0008270">
    <property type="term" value="F:zinc ion binding"/>
    <property type="evidence" value="ECO:0007669"/>
    <property type="project" value="UniProtKB-KW"/>
</dbReference>
<dbReference type="GO" id="GO:0034614">
    <property type="term" value="P:cellular response to reactive oxygen species"/>
    <property type="evidence" value="ECO:0007669"/>
    <property type="project" value="Ensembl"/>
</dbReference>
<dbReference type="GO" id="GO:0016562">
    <property type="term" value="P:protein import into peroxisome matrix, receptor recycling"/>
    <property type="evidence" value="ECO:0007669"/>
    <property type="project" value="Ensembl"/>
</dbReference>
<dbReference type="GO" id="GO:0000209">
    <property type="term" value="P:protein polyubiquitination"/>
    <property type="evidence" value="ECO:0007669"/>
    <property type="project" value="Ensembl"/>
</dbReference>
<dbReference type="CDD" id="cd16451">
    <property type="entry name" value="mRING_PEX12"/>
    <property type="match status" value="1"/>
</dbReference>
<dbReference type="FunFam" id="3.30.40.10:FF:000266">
    <property type="entry name" value="Peroxisome assembly protein 12"/>
    <property type="match status" value="1"/>
</dbReference>
<dbReference type="Gene3D" id="3.30.40.10">
    <property type="entry name" value="Zinc/RING finger domain, C3HC4 (zinc finger)"/>
    <property type="match status" value="1"/>
</dbReference>
<dbReference type="InterPro" id="IPR017375">
    <property type="entry name" value="PEX12"/>
</dbReference>
<dbReference type="InterPro" id="IPR006845">
    <property type="entry name" value="Pex_N"/>
</dbReference>
<dbReference type="InterPro" id="IPR013083">
    <property type="entry name" value="Znf_RING/FYVE/PHD"/>
</dbReference>
<dbReference type="PANTHER" id="PTHR12888:SF0">
    <property type="entry name" value="PEROXISOME ASSEMBLY PROTEIN 12"/>
    <property type="match status" value="1"/>
</dbReference>
<dbReference type="PANTHER" id="PTHR12888">
    <property type="entry name" value="PEROXISOME ASSEMBLY PROTEIN 12 PEROXIN-12"/>
    <property type="match status" value="1"/>
</dbReference>
<dbReference type="Pfam" id="PF04757">
    <property type="entry name" value="Pex2_Pex12"/>
    <property type="match status" value="1"/>
</dbReference>
<dbReference type="PIRSF" id="PIRSF038074">
    <property type="entry name" value="Peroxisome_assembly_p12"/>
    <property type="match status" value="1"/>
</dbReference>
<dbReference type="SUPFAM" id="SSF57850">
    <property type="entry name" value="RING/U-box"/>
    <property type="match status" value="1"/>
</dbReference>
<sequence length="359" mass="40633">MAEYGAHITTASVADDQPSIFEVVAQDSLMTAVRPALQHVVKVLAESNPAHYGFLWRWFDEIFTLLDFLLQQHYLSRTSASFSEHFYGLKRIVAGSSPHLQRPASAGLPKEHLWKSAMFLVLLPYLKVKLEKLASSLREEDEYSIHPPSSRWKRFYRAFLAAYPFVNMAWEGWFLTQQLRYILGKAEHHSPLLKLAGVRLARLTAQDMQAIKQRLVEASAMQEPVRSVGEKIKSALKKAVGGVALSLSTGLSVGVFFLQFLDWWYSSENQEAIKSLTALPTPPPPVHLDYNSDSPLLPKMKTVCPLCRKTRVNDTVLATSGYVFCYRCVFNYVRSHQACPITGYPTEVQHLIKLYSPEN</sequence>
<feature type="chain" id="PRO_0000218611" description="Peroxisome assembly protein 12">
    <location>
        <begin position="1"/>
        <end position="359"/>
    </location>
</feature>
<feature type="topological domain" description="Peroxisomal matrix" evidence="1">
    <location>
        <begin position="1"/>
        <end position="19"/>
    </location>
</feature>
<feature type="transmembrane region" description="Helical; Name=TM1" evidence="1">
    <location>
        <begin position="20"/>
        <end position="47"/>
    </location>
</feature>
<feature type="topological domain" description="Cytoplasmic" evidence="1">
    <location>
        <begin position="48"/>
        <end position="51"/>
    </location>
</feature>
<feature type="transmembrane region" description="Helical; Name=TM2" evidence="1">
    <location>
        <begin position="52"/>
        <end position="76"/>
    </location>
</feature>
<feature type="topological domain" description="Peroxisomal matrix" evidence="1">
    <location>
        <begin position="77"/>
        <end position="109"/>
    </location>
</feature>
<feature type="transmembrane region" description="Helical; Name=TM3" evidence="1">
    <location>
        <begin position="110"/>
        <end position="139"/>
    </location>
</feature>
<feature type="topological domain" description="Cytoplasmic" evidence="1">
    <location>
        <begin position="140"/>
        <end position="144"/>
    </location>
</feature>
<feature type="transmembrane region" description="Helical; Name=TM4" evidence="1">
    <location>
        <begin position="145"/>
        <end position="183"/>
    </location>
</feature>
<feature type="topological domain" description="Peroxisomal matrix" evidence="1">
    <location>
        <begin position="184"/>
        <end position="249"/>
    </location>
</feature>
<feature type="transmembrane region" description="Helical; Name=TM5" evidence="1">
    <location>
        <begin position="250"/>
        <end position="277"/>
    </location>
</feature>
<feature type="topological domain" description="Cytoplasmic" evidence="1">
    <location>
        <begin position="278"/>
        <end position="359"/>
    </location>
</feature>
<feature type="zinc finger region" description="RING-type; degenerate">
    <location>
        <begin position="304"/>
        <end position="343"/>
    </location>
</feature>
<feature type="binding site" evidence="1">
    <location>
        <position position="304"/>
    </location>
    <ligand>
        <name>Zn(2+)</name>
        <dbReference type="ChEBI" id="CHEBI:29105"/>
    </ligand>
</feature>
<feature type="binding site" evidence="1">
    <location>
        <position position="307"/>
    </location>
    <ligand>
        <name>Zn(2+)</name>
        <dbReference type="ChEBI" id="CHEBI:29105"/>
    </ligand>
</feature>
<feature type="binding site" evidence="1">
    <location>
        <position position="325"/>
    </location>
    <ligand>
        <name>Zn(2+)</name>
        <dbReference type="ChEBI" id="CHEBI:29105"/>
    </ligand>
</feature>
<feature type="binding site" evidence="1">
    <location>
        <position position="328"/>
    </location>
    <ligand>
        <name>Zn(2+)</name>
        <dbReference type="ChEBI" id="CHEBI:29105"/>
    </ligand>
</feature>
<evidence type="ECO:0000250" key="1">
    <source>
        <dbReference type="UniProtKB" id="G2Q5N0"/>
    </source>
</evidence>
<evidence type="ECO:0000250" key="2">
    <source>
        <dbReference type="UniProtKB" id="O00623"/>
    </source>
</evidence>
<evidence type="ECO:0000250" key="3">
    <source>
        <dbReference type="UniProtKB" id="Q04370"/>
    </source>
</evidence>
<evidence type="ECO:0000255" key="4"/>
<evidence type="ECO:0000305" key="5"/>
<comment type="function">
    <text evidence="2 3">Component of a retrotranslocation channel required for peroxisome organization by mediating export of the PEX5 receptor from peroxisomes to the cytosol, thereby promoting PEX5 recycling (By similarity). The retrotranslocation channel is composed of PEX2, PEX10 and PEX12; each subunit contributing transmembrane segments that coassemble into an open channel that specifically allows the passage of PEX5 through the peroxisomal membrane (By similarity). PEX12 also regulates PEX5 recycling by activating the E3 ubiquitin-protein ligase activity of PEX10 (By similarity). When PEX5 recycling is compromised, PEX12 stimulates PEX10-mediated polyubiquitination of PEX5, leading to its subsequent degradation (By similarity).</text>
</comment>
<comment type="pathway">
    <text evidence="2">Protein modification; protein ubiquitination.</text>
</comment>
<comment type="subunit">
    <text evidence="2">Component of the PEX2-PEX10-PEX12 retrotranslocation channel, composed of PEX2, PEX10 and PEX12. Interacts with PEX19 via its cytoplasmic domain.</text>
</comment>
<comment type="subcellular location">
    <subcellularLocation>
        <location evidence="2">Peroxisome membrane</location>
        <topology evidence="4">Multi-pass membrane protein</topology>
    </subcellularLocation>
</comment>
<comment type="domain">
    <text evidence="1">The three subunits of the retrotranslocation channel (PEX2, PEX10 and PEX12) coassemble in the membrane into a channel with an open 10 Angstrom pore. The RING-type zinc-fingers that catalyze PEX5 receptor ubiquitination are positioned above the pore on the cytosolic side of the complex.</text>
</comment>
<comment type="domain">
    <text evidence="3">The RING-type zinc-finger is degenerated and only coordinates one zinc ions, preventing E3 ubiquitin-protein ligase activity.</text>
</comment>
<comment type="similarity">
    <text evidence="5">Belongs to the pex2/pex10/pex12 family.</text>
</comment>
<protein>
    <recommendedName>
        <fullName evidence="5">Peroxisome assembly protein 12</fullName>
    </recommendedName>
    <alternativeName>
        <fullName evidence="5">Peroxin-12</fullName>
    </alternativeName>
</protein>
<gene>
    <name type="primary">Pex12</name>
</gene>
<organism>
    <name type="scientific">Mus musculus</name>
    <name type="common">Mouse</name>
    <dbReference type="NCBI Taxonomy" id="10090"/>
    <lineage>
        <taxon>Eukaryota</taxon>
        <taxon>Metazoa</taxon>
        <taxon>Chordata</taxon>
        <taxon>Craniata</taxon>
        <taxon>Vertebrata</taxon>
        <taxon>Euteleostomi</taxon>
        <taxon>Mammalia</taxon>
        <taxon>Eutheria</taxon>
        <taxon>Euarchontoglires</taxon>
        <taxon>Glires</taxon>
        <taxon>Rodentia</taxon>
        <taxon>Myomorpha</taxon>
        <taxon>Muroidea</taxon>
        <taxon>Muridae</taxon>
        <taxon>Murinae</taxon>
        <taxon>Mus</taxon>
        <taxon>Mus</taxon>
    </lineage>
</organism>
<proteinExistence type="evidence at protein level"/>
<name>PEX12_MOUSE</name>
<accession>Q8VC48</accession>
<keyword id="KW-0472">Membrane</keyword>
<keyword id="KW-0479">Metal-binding</keyword>
<keyword id="KW-0576">Peroxisome</keyword>
<keyword id="KW-0653">Protein transport</keyword>
<keyword id="KW-1185">Reference proteome</keyword>
<keyword id="KW-0812">Transmembrane</keyword>
<keyword id="KW-1133">Transmembrane helix</keyword>
<keyword id="KW-0813">Transport</keyword>
<keyword id="KW-0833">Ubl conjugation pathway</keyword>
<keyword id="KW-0862">Zinc</keyword>
<keyword id="KW-0863">Zinc-finger</keyword>